<organism>
    <name type="scientific">Xanthomonas oryzae pv. oryzae (strain MAFF 311018)</name>
    <dbReference type="NCBI Taxonomy" id="342109"/>
    <lineage>
        <taxon>Bacteria</taxon>
        <taxon>Pseudomonadati</taxon>
        <taxon>Pseudomonadota</taxon>
        <taxon>Gammaproteobacteria</taxon>
        <taxon>Lysobacterales</taxon>
        <taxon>Lysobacteraceae</taxon>
        <taxon>Xanthomonas</taxon>
    </lineage>
</organism>
<dbReference type="EC" id="2.1.1.177" evidence="1"/>
<dbReference type="EMBL" id="AP008229">
    <property type="protein sequence ID" value="BAE69890.1"/>
    <property type="molecule type" value="Genomic_DNA"/>
</dbReference>
<dbReference type="RefSeq" id="WP_011409102.1">
    <property type="nucleotide sequence ID" value="NC_007705.1"/>
</dbReference>
<dbReference type="SMR" id="Q2P0N7"/>
<dbReference type="GeneID" id="77338166"/>
<dbReference type="KEGG" id="xom:XOO3135"/>
<dbReference type="HOGENOM" id="CLU_100552_1_0_6"/>
<dbReference type="GO" id="GO:0005737">
    <property type="term" value="C:cytoplasm"/>
    <property type="evidence" value="ECO:0007669"/>
    <property type="project" value="UniProtKB-SubCell"/>
</dbReference>
<dbReference type="GO" id="GO:0070038">
    <property type="term" value="F:rRNA (pseudouridine-N3-)-methyltransferase activity"/>
    <property type="evidence" value="ECO:0007669"/>
    <property type="project" value="UniProtKB-UniRule"/>
</dbReference>
<dbReference type="CDD" id="cd18081">
    <property type="entry name" value="RlmH-like"/>
    <property type="match status" value="1"/>
</dbReference>
<dbReference type="Gene3D" id="3.40.1280.10">
    <property type="match status" value="1"/>
</dbReference>
<dbReference type="HAMAP" id="MF_00658">
    <property type="entry name" value="23SrRNA_methyltr_H"/>
    <property type="match status" value="1"/>
</dbReference>
<dbReference type="InterPro" id="IPR029028">
    <property type="entry name" value="Alpha/beta_knot_MTases"/>
</dbReference>
<dbReference type="InterPro" id="IPR003742">
    <property type="entry name" value="RlmH-like"/>
</dbReference>
<dbReference type="InterPro" id="IPR029026">
    <property type="entry name" value="tRNA_m1G_MTases_N"/>
</dbReference>
<dbReference type="NCBIfam" id="NF000986">
    <property type="entry name" value="PRK00103.1-4"/>
    <property type="match status" value="1"/>
</dbReference>
<dbReference type="NCBIfam" id="TIGR00246">
    <property type="entry name" value="tRNA_RlmH_YbeA"/>
    <property type="match status" value="1"/>
</dbReference>
<dbReference type="PANTHER" id="PTHR33603">
    <property type="entry name" value="METHYLTRANSFERASE"/>
    <property type="match status" value="1"/>
</dbReference>
<dbReference type="PANTHER" id="PTHR33603:SF1">
    <property type="entry name" value="RIBOSOMAL RNA LARGE SUBUNIT METHYLTRANSFERASE H"/>
    <property type="match status" value="1"/>
</dbReference>
<dbReference type="Pfam" id="PF02590">
    <property type="entry name" value="SPOUT_MTase"/>
    <property type="match status" value="1"/>
</dbReference>
<dbReference type="PIRSF" id="PIRSF004505">
    <property type="entry name" value="MT_bac"/>
    <property type="match status" value="1"/>
</dbReference>
<dbReference type="SUPFAM" id="SSF75217">
    <property type="entry name" value="alpha/beta knot"/>
    <property type="match status" value="1"/>
</dbReference>
<gene>
    <name evidence="1" type="primary">rlmH</name>
    <name type="ordered locus">XOO3135</name>
</gene>
<keyword id="KW-0963">Cytoplasm</keyword>
<keyword id="KW-0489">Methyltransferase</keyword>
<keyword id="KW-0698">rRNA processing</keyword>
<keyword id="KW-0949">S-adenosyl-L-methionine</keyword>
<keyword id="KW-0808">Transferase</keyword>
<proteinExistence type="inferred from homology"/>
<feature type="chain" id="PRO_0000260631" description="Ribosomal RNA large subunit methyltransferase H">
    <location>
        <begin position="1"/>
        <end position="156"/>
    </location>
</feature>
<feature type="binding site" evidence="1">
    <location>
        <position position="73"/>
    </location>
    <ligand>
        <name>S-adenosyl-L-methionine</name>
        <dbReference type="ChEBI" id="CHEBI:59789"/>
    </ligand>
</feature>
<feature type="binding site" evidence="1">
    <location>
        <position position="104"/>
    </location>
    <ligand>
        <name>S-adenosyl-L-methionine</name>
        <dbReference type="ChEBI" id="CHEBI:59789"/>
    </ligand>
</feature>
<feature type="binding site" evidence="1">
    <location>
        <begin position="123"/>
        <end position="128"/>
    </location>
    <ligand>
        <name>S-adenosyl-L-methionine</name>
        <dbReference type="ChEBI" id="CHEBI:59789"/>
    </ligand>
</feature>
<protein>
    <recommendedName>
        <fullName evidence="1">Ribosomal RNA large subunit methyltransferase H</fullName>
        <ecNumber evidence="1">2.1.1.177</ecNumber>
    </recommendedName>
    <alternativeName>
        <fullName evidence="1">23S rRNA (pseudouridine1915-N3)-methyltransferase</fullName>
    </alternativeName>
    <alternativeName>
        <fullName evidence="1">23S rRNA m3Psi1915 methyltransferase</fullName>
    </alternativeName>
    <alternativeName>
        <fullName evidence="1">rRNA (pseudouridine-N3-)-methyltransferase RlmH</fullName>
    </alternativeName>
</protein>
<reference key="1">
    <citation type="journal article" date="2005" name="Jpn. Agric. Res. Q.">
        <title>Genome sequence of Xanthomonas oryzae pv. oryzae suggests contribution of large numbers of effector genes and insertion sequences to its race diversity.</title>
        <authorList>
            <person name="Ochiai H."/>
            <person name="Inoue Y."/>
            <person name="Takeya M."/>
            <person name="Sasaki A."/>
            <person name="Kaku H."/>
        </authorList>
    </citation>
    <scope>NUCLEOTIDE SEQUENCE [LARGE SCALE GENOMIC DNA]</scope>
    <source>
        <strain>MAFF 311018</strain>
    </source>
</reference>
<comment type="function">
    <text evidence="1">Specifically methylates the pseudouridine at position 1915 (m3Psi1915) in 23S rRNA.</text>
</comment>
<comment type="catalytic activity">
    <reaction evidence="1">
        <text>pseudouridine(1915) in 23S rRNA + S-adenosyl-L-methionine = N(3)-methylpseudouridine(1915) in 23S rRNA + S-adenosyl-L-homocysteine + H(+)</text>
        <dbReference type="Rhea" id="RHEA:42752"/>
        <dbReference type="Rhea" id="RHEA-COMP:10221"/>
        <dbReference type="Rhea" id="RHEA-COMP:10222"/>
        <dbReference type="ChEBI" id="CHEBI:15378"/>
        <dbReference type="ChEBI" id="CHEBI:57856"/>
        <dbReference type="ChEBI" id="CHEBI:59789"/>
        <dbReference type="ChEBI" id="CHEBI:65314"/>
        <dbReference type="ChEBI" id="CHEBI:74486"/>
        <dbReference type="EC" id="2.1.1.177"/>
    </reaction>
</comment>
<comment type="subunit">
    <text evidence="1">Homodimer.</text>
</comment>
<comment type="subcellular location">
    <subcellularLocation>
        <location evidence="1">Cytoplasm</location>
    </subcellularLocation>
</comment>
<comment type="similarity">
    <text evidence="1">Belongs to the RNA methyltransferase RlmH family.</text>
</comment>
<name>RLMH_XANOM</name>
<sequence length="156" mass="17321">MKCRLIATGERAPSWVAQGFAEYQKRLSHWMPLELVEIEPGLRGKGRDAQRATDDEGRRVLAALPKNAYVVALDVPGRPLSSEQLAQRMEHWRGQGRDLALLIGGPEGHSAEVLKSASESWSIGPLTLPHMLVRLIVAEQLYRAAAMLANHPYHRA</sequence>
<accession>Q2P0N7</accession>
<evidence type="ECO:0000255" key="1">
    <source>
        <dbReference type="HAMAP-Rule" id="MF_00658"/>
    </source>
</evidence>